<keyword id="KW-0369">Histidine metabolism</keyword>
<keyword id="KW-0378">Hydrolase</keyword>
<keyword id="KW-0464">Manganese</keyword>
<keyword id="KW-0479">Metal-binding</keyword>
<evidence type="ECO:0000255" key="1">
    <source>
        <dbReference type="HAMAP-Rule" id="MF_00737"/>
    </source>
</evidence>
<proteinExistence type="inferred from homology"/>
<reference key="1">
    <citation type="journal article" date="2007" name="J. Bacteriol.">
        <title>Complete genome of acute rheumatic fever-associated serotype M5 Streptococcus pyogenes strain Manfredo.</title>
        <authorList>
            <person name="Holden M.T.G."/>
            <person name="Scott A."/>
            <person name="Cherevach I."/>
            <person name="Chillingworth T."/>
            <person name="Churcher C."/>
            <person name="Cronin A."/>
            <person name="Dowd L."/>
            <person name="Feltwell T."/>
            <person name="Hamlin N."/>
            <person name="Holroyd S."/>
            <person name="Jagels K."/>
            <person name="Moule S."/>
            <person name="Mungall K."/>
            <person name="Quail M.A."/>
            <person name="Price C."/>
            <person name="Rabbinowitsch E."/>
            <person name="Sharp S."/>
            <person name="Skelton J."/>
            <person name="Whitehead S."/>
            <person name="Barrell B.G."/>
            <person name="Kehoe M."/>
            <person name="Parkhill J."/>
        </authorList>
    </citation>
    <scope>NUCLEOTIDE SEQUENCE [LARGE SCALE GENOMIC DNA]</scope>
    <source>
        <strain>Manfredo</strain>
    </source>
</reference>
<gene>
    <name evidence="1" type="primary">hutG</name>
    <name type="ordered locus">SpyM51736</name>
</gene>
<organism>
    <name type="scientific">Streptococcus pyogenes serotype M5 (strain Manfredo)</name>
    <dbReference type="NCBI Taxonomy" id="160491"/>
    <lineage>
        <taxon>Bacteria</taxon>
        <taxon>Bacillati</taxon>
        <taxon>Bacillota</taxon>
        <taxon>Bacilli</taxon>
        <taxon>Lactobacillales</taxon>
        <taxon>Streptococcaceae</taxon>
        <taxon>Streptococcus</taxon>
    </lineage>
</organism>
<name>HUTG_STRPG</name>
<dbReference type="EC" id="3.5.3.8" evidence="1"/>
<dbReference type="EMBL" id="AM295007">
    <property type="protein sequence ID" value="CAM31058.1"/>
    <property type="molecule type" value="Genomic_DNA"/>
</dbReference>
<dbReference type="RefSeq" id="WP_011889214.1">
    <property type="nucleotide sequence ID" value="NC_009332.1"/>
</dbReference>
<dbReference type="SMR" id="A2RGS6"/>
<dbReference type="KEGG" id="spf:SpyM51736"/>
<dbReference type="HOGENOM" id="CLU_039478_2_0_9"/>
<dbReference type="UniPathway" id="UPA00379">
    <property type="reaction ID" value="UER00552"/>
</dbReference>
<dbReference type="GO" id="GO:0008783">
    <property type="term" value="F:agmatinase activity"/>
    <property type="evidence" value="ECO:0007669"/>
    <property type="project" value="TreeGrafter"/>
</dbReference>
<dbReference type="GO" id="GO:0050415">
    <property type="term" value="F:formimidoylglutamase activity"/>
    <property type="evidence" value="ECO:0007669"/>
    <property type="project" value="UniProtKB-UniRule"/>
</dbReference>
<dbReference type="GO" id="GO:0030145">
    <property type="term" value="F:manganese ion binding"/>
    <property type="evidence" value="ECO:0007669"/>
    <property type="project" value="UniProtKB-UniRule"/>
</dbReference>
<dbReference type="GO" id="GO:0019556">
    <property type="term" value="P:L-histidine catabolic process to glutamate and formamide"/>
    <property type="evidence" value="ECO:0007669"/>
    <property type="project" value="UniProtKB-UniPathway"/>
</dbReference>
<dbReference type="GO" id="GO:0019557">
    <property type="term" value="P:L-histidine catabolic process to glutamate and formate"/>
    <property type="evidence" value="ECO:0007669"/>
    <property type="project" value="UniProtKB-UniPathway"/>
</dbReference>
<dbReference type="GO" id="GO:0033389">
    <property type="term" value="P:putrescine biosynthetic process from arginine, via agmatine"/>
    <property type="evidence" value="ECO:0007669"/>
    <property type="project" value="TreeGrafter"/>
</dbReference>
<dbReference type="CDD" id="cd09988">
    <property type="entry name" value="Formimidoylglutamase"/>
    <property type="match status" value="1"/>
</dbReference>
<dbReference type="Gene3D" id="3.40.800.10">
    <property type="entry name" value="Ureohydrolase domain"/>
    <property type="match status" value="1"/>
</dbReference>
<dbReference type="HAMAP" id="MF_00737">
    <property type="entry name" value="Formimidoylglutam"/>
    <property type="match status" value="1"/>
</dbReference>
<dbReference type="InterPro" id="IPR005923">
    <property type="entry name" value="HutG"/>
</dbReference>
<dbReference type="InterPro" id="IPR006035">
    <property type="entry name" value="Ureohydrolase"/>
</dbReference>
<dbReference type="InterPro" id="IPR023696">
    <property type="entry name" value="Ureohydrolase_dom_sf"/>
</dbReference>
<dbReference type="NCBIfam" id="NF010347">
    <property type="entry name" value="PRK13775.1"/>
    <property type="match status" value="1"/>
</dbReference>
<dbReference type="PANTHER" id="PTHR11358">
    <property type="entry name" value="ARGINASE/AGMATINASE"/>
    <property type="match status" value="1"/>
</dbReference>
<dbReference type="PANTHER" id="PTHR11358:SF35">
    <property type="entry name" value="FORMIMIDOYLGLUTAMASE"/>
    <property type="match status" value="1"/>
</dbReference>
<dbReference type="Pfam" id="PF00491">
    <property type="entry name" value="Arginase"/>
    <property type="match status" value="1"/>
</dbReference>
<dbReference type="PIRSF" id="PIRSF036979">
    <property type="entry name" value="Arginase"/>
    <property type="match status" value="1"/>
</dbReference>
<dbReference type="PRINTS" id="PR00116">
    <property type="entry name" value="ARGINASE"/>
</dbReference>
<dbReference type="SUPFAM" id="SSF52768">
    <property type="entry name" value="Arginase/deacetylase"/>
    <property type="match status" value="1"/>
</dbReference>
<dbReference type="PROSITE" id="PS51409">
    <property type="entry name" value="ARGINASE_2"/>
    <property type="match status" value="1"/>
</dbReference>
<comment type="function">
    <text evidence="1">Catalyzes the conversion of N-formimidoyl-L-glutamate to L-glutamate and formamide.</text>
</comment>
<comment type="catalytic activity">
    <reaction evidence="1">
        <text>N-formimidoyl-L-glutamate + H2O = formamide + L-glutamate</text>
        <dbReference type="Rhea" id="RHEA:22492"/>
        <dbReference type="ChEBI" id="CHEBI:15377"/>
        <dbReference type="ChEBI" id="CHEBI:16397"/>
        <dbReference type="ChEBI" id="CHEBI:29985"/>
        <dbReference type="ChEBI" id="CHEBI:58928"/>
        <dbReference type="EC" id="3.5.3.8"/>
    </reaction>
</comment>
<comment type="cofactor">
    <cofactor evidence="1">
        <name>Mn(2+)</name>
        <dbReference type="ChEBI" id="CHEBI:29035"/>
    </cofactor>
    <text evidence="1">Binds 2 manganese ions per subunit.</text>
</comment>
<comment type="pathway">
    <text evidence="1">Amino-acid degradation; L-histidine degradation into L-glutamate; L-glutamate from N-formimidoyl-L-glutamate (hydrolase route): step 1/1.</text>
</comment>
<comment type="similarity">
    <text evidence="1">Belongs to the arginase family.</text>
</comment>
<accession>A2RGS6</accession>
<sequence>MLEDYYPSTTSYYHGGIDDDLYTAKWGMVMTFLDLNDSSLTPFEGTHFALIGFKSDKGVYINNGRVGAVESPAAIRTQLAKFPWHLGNQVMVYDVGNIDGPNRSLEQLQNSLSKAIKRMCDFNLKPIVLGGGHETAYGHYLGLRQSLSPSDDLAVINMDAHFDLRPYGQTGPNSGTGFRQMFDDAVADKRLFKYFVLGIQEHNNNLFLFDFVAKSKGIQFLTGQDIYQMGHQKVCRAIDRFLEGQERVYLTIDMDCFSVGAAPGVSAIQSLGVDPNLAVLVLQHIAASGKLVGFDVVEVSPPHDIDNHTANLAATFIFYLVQIMAQHR</sequence>
<feature type="chain" id="PRO_1000046304" description="Formimidoylglutamase">
    <location>
        <begin position="1"/>
        <end position="328"/>
    </location>
</feature>
<feature type="binding site" evidence="1">
    <location>
        <position position="133"/>
    </location>
    <ligand>
        <name>Mn(2+)</name>
        <dbReference type="ChEBI" id="CHEBI:29035"/>
        <label>1</label>
    </ligand>
</feature>
<feature type="binding site" evidence="1">
    <location>
        <position position="159"/>
    </location>
    <ligand>
        <name>Mn(2+)</name>
        <dbReference type="ChEBI" id="CHEBI:29035"/>
        <label>1</label>
    </ligand>
</feature>
<feature type="binding site" evidence="1">
    <location>
        <position position="159"/>
    </location>
    <ligand>
        <name>Mn(2+)</name>
        <dbReference type="ChEBI" id="CHEBI:29035"/>
        <label>2</label>
    </ligand>
</feature>
<feature type="binding site" evidence="1">
    <location>
        <position position="161"/>
    </location>
    <ligand>
        <name>Mn(2+)</name>
        <dbReference type="ChEBI" id="CHEBI:29035"/>
        <label>2</label>
    </ligand>
</feature>
<feature type="binding site" evidence="1">
    <location>
        <position position="163"/>
    </location>
    <ligand>
        <name>Mn(2+)</name>
        <dbReference type="ChEBI" id="CHEBI:29035"/>
        <label>1</label>
    </ligand>
</feature>
<feature type="binding site" evidence="1">
    <location>
        <position position="253"/>
    </location>
    <ligand>
        <name>Mn(2+)</name>
        <dbReference type="ChEBI" id="CHEBI:29035"/>
        <label>1</label>
    </ligand>
</feature>
<feature type="binding site" evidence="1">
    <location>
        <position position="253"/>
    </location>
    <ligand>
        <name>Mn(2+)</name>
        <dbReference type="ChEBI" id="CHEBI:29035"/>
        <label>2</label>
    </ligand>
</feature>
<feature type="binding site" evidence="1">
    <location>
        <position position="255"/>
    </location>
    <ligand>
        <name>Mn(2+)</name>
        <dbReference type="ChEBI" id="CHEBI:29035"/>
        <label>2</label>
    </ligand>
</feature>
<protein>
    <recommendedName>
        <fullName evidence="1">Formimidoylglutamase</fullName>
        <ecNumber evidence="1">3.5.3.8</ecNumber>
    </recommendedName>
    <alternativeName>
        <fullName evidence="1">Formiminoglutamase</fullName>
    </alternativeName>
    <alternativeName>
        <fullName evidence="1">Formiminoglutamate hydrolase</fullName>
    </alternativeName>
</protein>